<protein>
    <recommendedName>
        <fullName evidence="6">Mitochondrial potassium channel ATP-binding subunit</fullName>
    </recommendedName>
    <alternativeName>
        <fullName evidence="2">ATP-binding cassette sub-family B member 8, mitochondrial</fullName>
        <shortName evidence="2">ABCB8</shortName>
    </alternativeName>
    <alternativeName>
        <fullName evidence="2">Mitochondrial sulfonylurea-receptor</fullName>
        <shortName evidence="2">MITOSUR</shortName>
    </alternativeName>
</protein>
<feature type="transit peptide" description="Mitochondrion" evidence="3">
    <location>
        <begin position="1"/>
        <end position="31"/>
    </location>
</feature>
<feature type="chain" id="PRO_0000356237" description="Mitochondrial potassium channel ATP-binding subunit" evidence="3">
    <location>
        <begin position="32"/>
        <end position="688"/>
    </location>
</feature>
<feature type="transmembrane region" description="Helical" evidence="3 5">
    <location>
        <begin position="115"/>
        <end position="135"/>
    </location>
</feature>
<feature type="transmembrane region" description="Helical" evidence="3 5">
    <location>
        <begin position="168"/>
        <end position="188"/>
    </location>
</feature>
<feature type="transmembrane region" description="Helical" evidence="3 5">
    <location>
        <begin position="268"/>
        <end position="288"/>
    </location>
</feature>
<feature type="transmembrane region" description="Helical" evidence="3 5">
    <location>
        <begin position="342"/>
        <end position="362"/>
    </location>
</feature>
<feature type="domain" description="ABC transmembrane type-1" evidence="5">
    <location>
        <begin position="121"/>
        <end position="409"/>
    </location>
</feature>
<feature type="domain" description="ABC transporter" evidence="4">
    <location>
        <begin position="442"/>
        <end position="679"/>
    </location>
</feature>
<feature type="binding site" evidence="4">
    <location>
        <begin position="477"/>
        <end position="484"/>
    </location>
    <ligand>
        <name>ATP</name>
        <dbReference type="ChEBI" id="CHEBI:30616"/>
    </ligand>
</feature>
<organism>
    <name type="scientific">Xenopus tropicalis</name>
    <name type="common">Western clawed frog</name>
    <name type="synonym">Silurana tropicalis</name>
    <dbReference type="NCBI Taxonomy" id="8364"/>
    <lineage>
        <taxon>Eukaryota</taxon>
        <taxon>Metazoa</taxon>
        <taxon>Chordata</taxon>
        <taxon>Craniata</taxon>
        <taxon>Vertebrata</taxon>
        <taxon>Euteleostomi</taxon>
        <taxon>Amphibia</taxon>
        <taxon>Batrachia</taxon>
        <taxon>Anura</taxon>
        <taxon>Pipoidea</taxon>
        <taxon>Pipidae</taxon>
        <taxon>Xenopodinae</taxon>
        <taxon>Xenopus</taxon>
        <taxon>Silurana</taxon>
    </lineage>
</organism>
<sequence length="688" mass="74747">MLFHFLQAGLRQCRPPARLVGLETGLSGARGPSLPATLANYSRLRNACRPPWRSPWKPVKKGKLLAVLLGPAVLGVGVRAARCQVELIAPPLIVPQGARPEPEFNWAEFWKLLRPQLIALLTAVLLAFGAALLNIRIPLMLGELVNVVSRYTREHAGNYLQEVQGPALKLLCLYGAQGLLTCGYIVLLSRVGERVAGSMRKSLFFSLLRQDVAFFDAEKTGLLVNRLTSDVQEFKSSFKQVISQGLRSLTQTVGCFLSLYYISPKLTGLLLVVMPVLVGSGALIGSFLRKLSRRAQEQVARATGLADEALGNVRTVKAFAMESREMELYSAEVDKSSGQNEVLGVGIAVFQGLSNVVLNCIVLGTIFAGGSLMSSKELSAGELMSFLVASQTVQRSMANMSVLFGQVVRGLSAGGRVFEFMSLEPTIPLSGGFKLPVLRGEIHFKDVSFSYPTRPGHEVLRSFDLRIPHGKTVALVGQSGGGKSTVAALLERFYDPTEGAVQLDGVDIRILDPSWLRGEVIGFINQEPVLFGTTIIENIRFGRPDATDAEVHEAAIQANADSFIRSFPEGYNTMLGERGVTLSGGQKQRVAIARALLKDPKILILDEATSALDTESERAVQVALDRARSGRTVLVIAHRLSTISEADFIVVLSKGQVAEFGTHQDLLRRGGLYADLIRRQNQESQEAQ</sequence>
<proteinExistence type="evidence at transcript level"/>
<dbReference type="EMBL" id="BC166360">
    <property type="protein sequence ID" value="AAI66360.1"/>
    <property type="molecule type" value="mRNA"/>
</dbReference>
<dbReference type="RefSeq" id="NP_001121515.1">
    <property type="nucleotide sequence ID" value="NM_001128043.1"/>
</dbReference>
<dbReference type="RefSeq" id="XP_031759100.1">
    <property type="nucleotide sequence ID" value="XM_031903240.1"/>
</dbReference>
<dbReference type="SMR" id="B2GUP8"/>
<dbReference type="FunCoup" id="B2GUP8">
    <property type="interactions" value="1113"/>
</dbReference>
<dbReference type="STRING" id="8364.ENSXETP00000008241"/>
<dbReference type="PaxDb" id="8364-ENSXETP00000026160"/>
<dbReference type="GeneID" id="100158634"/>
<dbReference type="KEGG" id="xtr:100158634"/>
<dbReference type="AGR" id="Xenbase:XB-GENE-1010256"/>
<dbReference type="CTD" id="11194"/>
<dbReference type="Xenbase" id="XB-GENE-1010256">
    <property type="gene designation" value="abcb8"/>
</dbReference>
<dbReference type="eggNOG" id="KOG0058">
    <property type="taxonomic scope" value="Eukaryota"/>
</dbReference>
<dbReference type="InParanoid" id="B2GUP8"/>
<dbReference type="OMA" id="MTWLGER"/>
<dbReference type="OrthoDB" id="6500128at2759"/>
<dbReference type="Proteomes" id="UP000008143">
    <property type="component" value="Chromosome 6"/>
</dbReference>
<dbReference type="Bgee" id="ENSXETG00000011958">
    <property type="expression patterns" value="Expressed in testis and 16 other cell types or tissues"/>
</dbReference>
<dbReference type="GO" id="GO:0062157">
    <property type="term" value="C:mitochondrial ATP-gated potassium channel complex"/>
    <property type="evidence" value="ECO:0000250"/>
    <property type="project" value="UniProtKB"/>
</dbReference>
<dbReference type="GO" id="GO:0005743">
    <property type="term" value="C:mitochondrial inner membrane"/>
    <property type="evidence" value="ECO:0007669"/>
    <property type="project" value="UniProtKB-SubCell"/>
</dbReference>
<dbReference type="GO" id="GO:0005739">
    <property type="term" value="C:mitochondrion"/>
    <property type="evidence" value="ECO:0000250"/>
    <property type="project" value="UniProtKB"/>
</dbReference>
<dbReference type="GO" id="GO:0140359">
    <property type="term" value="F:ABC-type transporter activity"/>
    <property type="evidence" value="ECO:0007669"/>
    <property type="project" value="InterPro"/>
</dbReference>
<dbReference type="GO" id="GO:0005524">
    <property type="term" value="F:ATP binding"/>
    <property type="evidence" value="ECO:0000250"/>
    <property type="project" value="UniProtKB"/>
</dbReference>
<dbReference type="GO" id="GO:0016887">
    <property type="term" value="F:ATP hydrolysis activity"/>
    <property type="evidence" value="ECO:0007669"/>
    <property type="project" value="InterPro"/>
</dbReference>
<dbReference type="GO" id="GO:0071805">
    <property type="term" value="P:potassium ion transmembrane transport"/>
    <property type="evidence" value="ECO:0000250"/>
    <property type="project" value="UniProtKB"/>
</dbReference>
<dbReference type="CDD" id="cd18574">
    <property type="entry name" value="ABC_6TM_ABCB8_like"/>
    <property type="match status" value="1"/>
</dbReference>
<dbReference type="CDD" id="cd03249">
    <property type="entry name" value="ABC_MTABC3_MDL1_MDL2"/>
    <property type="match status" value="1"/>
</dbReference>
<dbReference type="FunFam" id="1.20.1560.10:FF:000016">
    <property type="entry name" value="ATP-binding cassette sub-family B member 8, mitochondrial"/>
    <property type="match status" value="1"/>
</dbReference>
<dbReference type="FunFam" id="3.40.50.300:FF:000403">
    <property type="entry name" value="ATP-binding cassette sub-family B member 8, mitochondrial"/>
    <property type="match status" value="1"/>
</dbReference>
<dbReference type="Gene3D" id="1.20.1560.10">
    <property type="entry name" value="ABC transporter type 1, transmembrane domain"/>
    <property type="match status" value="1"/>
</dbReference>
<dbReference type="Gene3D" id="3.40.50.300">
    <property type="entry name" value="P-loop containing nucleotide triphosphate hydrolases"/>
    <property type="match status" value="1"/>
</dbReference>
<dbReference type="InterPro" id="IPR003593">
    <property type="entry name" value="AAA+_ATPase"/>
</dbReference>
<dbReference type="InterPro" id="IPR011527">
    <property type="entry name" value="ABC1_TM_dom"/>
</dbReference>
<dbReference type="InterPro" id="IPR036640">
    <property type="entry name" value="ABC1_TM_sf"/>
</dbReference>
<dbReference type="InterPro" id="IPR003439">
    <property type="entry name" value="ABC_transporter-like_ATP-bd"/>
</dbReference>
<dbReference type="InterPro" id="IPR017871">
    <property type="entry name" value="ABC_transporter-like_CS"/>
</dbReference>
<dbReference type="InterPro" id="IPR027417">
    <property type="entry name" value="P-loop_NTPase"/>
</dbReference>
<dbReference type="InterPro" id="IPR039421">
    <property type="entry name" value="Type_1_exporter"/>
</dbReference>
<dbReference type="PANTHER" id="PTHR43394">
    <property type="entry name" value="ATP-DEPENDENT PERMEASE MDL1, MITOCHONDRIAL"/>
    <property type="match status" value="1"/>
</dbReference>
<dbReference type="PANTHER" id="PTHR43394:SF17">
    <property type="entry name" value="MITOCHONDRIAL POTASSIUM CHANNEL ATP-BINDING SUBUNIT"/>
    <property type="match status" value="1"/>
</dbReference>
<dbReference type="Pfam" id="PF00664">
    <property type="entry name" value="ABC_membrane"/>
    <property type="match status" value="1"/>
</dbReference>
<dbReference type="Pfam" id="PF00005">
    <property type="entry name" value="ABC_tran"/>
    <property type="match status" value="1"/>
</dbReference>
<dbReference type="SMART" id="SM00382">
    <property type="entry name" value="AAA"/>
    <property type="match status" value="1"/>
</dbReference>
<dbReference type="SUPFAM" id="SSF90123">
    <property type="entry name" value="ABC transporter transmembrane region"/>
    <property type="match status" value="1"/>
</dbReference>
<dbReference type="SUPFAM" id="SSF52540">
    <property type="entry name" value="P-loop containing nucleoside triphosphate hydrolases"/>
    <property type="match status" value="1"/>
</dbReference>
<dbReference type="PROSITE" id="PS50929">
    <property type="entry name" value="ABC_TM1F"/>
    <property type="match status" value="1"/>
</dbReference>
<dbReference type="PROSITE" id="PS00211">
    <property type="entry name" value="ABC_TRANSPORTER_1"/>
    <property type="match status" value="1"/>
</dbReference>
<dbReference type="PROSITE" id="PS50893">
    <property type="entry name" value="ABC_TRANSPORTER_2"/>
    <property type="match status" value="1"/>
</dbReference>
<gene>
    <name evidence="2" type="primary">abcb8</name>
    <name evidence="2" type="synonym">mitosur</name>
</gene>
<reference key="1">
    <citation type="submission" date="2008-04" db="EMBL/GenBank/DDBJ databases">
        <authorList>
            <consortium name="NIH - Xenopus Gene Collection (XGC) project"/>
        </authorList>
    </citation>
    <scope>NUCLEOTIDE SEQUENCE [LARGE SCALE MRNA]</scope>
    <source>
        <tissue>Testis</tissue>
    </source>
</reference>
<comment type="function">
    <text evidence="1 2">ATP-binding subunit of the mitochondrial ATP-gated potassium channel (mitoK(ATP)). Together with pore-forming subunit CCDC51/MITOK of the mitoK(ATP) channel, mediates ATP-dependent potassium currents across the mitochondrial inner membrane. An increase in ATP intracellular levels closes the channel, inhibiting K(+) transport, whereas a decrease in ATP levels enhances K(+) uptake in the mitochondrial matrix (By similarity). Plays a role in mitochondrial iron transport (By similarity). Required for maintenance of normal cardiac function, possibly by influencing mitochondrial iron export and regulating the maturation of cytosolic iron sulfur cluster-containing enzymes (By similarity).</text>
</comment>
<comment type="subunit">
    <text evidence="2">Component of the mitochondrial potassium channel (mitoK(ATP)).</text>
</comment>
<comment type="subcellular location">
    <subcellularLocation>
        <location evidence="2">Mitochondrion inner membrane</location>
        <topology evidence="5">Multi-pass membrane protein</topology>
    </subcellularLocation>
</comment>
<comment type="similarity">
    <text evidence="6">Belongs to the ABC transporter superfamily. ABCB family. Multidrug resistance exporter (TC 3.A.1.201) subfamily.</text>
</comment>
<name>MITOS_XENTR</name>
<evidence type="ECO:0000250" key="1">
    <source>
        <dbReference type="UniProtKB" id="Q9CXJ4"/>
    </source>
</evidence>
<evidence type="ECO:0000250" key="2">
    <source>
        <dbReference type="UniProtKB" id="Q9NUT2"/>
    </source>
</evidence>
<evidence type="ECO:0000255" key="3"/>
<evidence type="ECO:0000255" key="4">
    <source>
        <dbReference type="PROSITE-ProRule" id="PRU00434"/>
    </source>
</evidence>
<evidence type="ECO:0000255" key="5">
    <source>
        <dbReference type="PROSITE-ProRule" id="PRU00441"/>
    </source>
</evidence>
<evidence type="ECO:0000305" key="6"/>
<keyword id="KW-0067">ATP-binding</keyword>
<keyword id="KW-0406">Ion transport</keyword>
<keyword id="KW-0472">Membrane</keyword>
<keyword id="KW-0496">Mitochondrion</keyword>
<keyword id="KW-0999">Mitochondrion inner membrane</keyword>
<keyword id="KW-0547">Nucleotide-binding</keyword>
<keyword id="KW-0630">Potassium</keyword>
<keyword id="KW-0633">Potassium transport</keyword>
<keyword id="KW-1185">Reference proteome</keyword>
<keyword id="KW-0809">Transit peptide</keyword>
<keyword id="KW-0812">Transmembrane</keyword>
<keyword id="KW-1133">Transmembrane helix</keyword>
<keyword id="KW-0813">Transport</keyword>
<accession>B2GUP8</accession>